<sequence>MLRNGSLRQSLRTLDSFSLAPEDVLKTAIKTVEDYEGDNIDSNGEIKITRDAKEEVVNKVSIPQLYRYTTTLEKLLLFIGTLVAVITGAGLPLMSILQGKVSQAFINEQIVINNNGSTFLPTGQNYTKTDFEHDVMNVVWSYAAMTVGMWAAGQITVTCYLYVAEQMNNRLRREFVKSILRQEISWFDTNHSGTLATKLFDNLERVKEGTGDKIGMAFQYLSQFITGFIVAFTHSWQLTLVMLAVTPIQALCGFAIAKSMSTFAIRETLRYAKAGKVVEETISSIRTVVSLNGLRYELERYSTAVEEAKKAGVLKGLFLGISFGAMQASNFISFALAFYIGVGWVHDGSLNFGDMLTTFSSVMMGSMALGLAGPQLAVLGTAQGAASGIYEVLDRKPVIDSSSKAGRKDMKIKGDITVENVHFTYPSRPDVPILRGMNLRVNAGQTVALVGSSGCGKSTIISLLLRYYDVLKGKITIDGVDVRDINLEFLRKNVAVVSQEPALFNCTIEENISLGKEGITREEMVAACKMANAEKFIKTLPNGYNTLVGDRGTQLSGGQKQRIAIARALVRNPKILLLDEATSALDAESEGIVQQALDKAAKGRTTIIIAHRLSTIRNADLIISCKNGQVVEVGDHRALMAQQGLYYDLVTAQTFTDAVDSAAEGKFSRENSVARQTSEHEGLSRQASEMDDIMNRVRSSTIGSITNGPVIDEKEERIGKDALSRLKQELEENNAQKTNLFEILYHARPHALSLFIGMSTATIGGFIYPTYSVFFTSFMNVFAGNPADFLSQGHFWALMFLVLAAAQGICSFLMTFFMGIASESLTRDLRNKLFRNVLSQHIGFFDSPQNASGKISTRLATDVPNLRTAIDFRFSTVITTLVSMVAGIGLAFFYGWQMALLIIAILPIVAFGQYLRGRRFTGKNVKSASEFADSGKIAIEAIENVRTVQALAREDTFYENFCEKLDIPHKEAIKEAFIQGLSYGCASSVLYLLNTCAYRMGLALIITDPPTMQPMRVLRVMYAITISTSTLGFATSYFPEYAKATFAGGIIFGMLRKISKIDSLSLAGEKKKLYGKVIFKNVRFAYPERPEIEILKGLSFSVEPGQTLALVGPSGCGKSTVVALLERFYDTLGGEIFIDGSEIKTLNPEHTRSQIAIVSQEPTLFDCSIAENIIYGLDPSSVTMAQVEEAARLANIHNFIAELPEGFETRVGDRGTQLSGGQKQRIAIARALVRNPKILLLDEATSALDTESEKVVQEALDRAREGRTCIVIAHRLNTVMNADCIAVVSNGTIIEKGTHTQLMSEKGAYYKLTQKQMTEKK</sequence>
<keyword id="KW-0002">3D-structure</keyword>
<keyword id="KW-0067">ATP-binding</keyword>
<keyword id="KW-0325">Glycoprotein</keyword>
<keyword id="KW-0472">Membrane</keyword>
<keyword id="KW-0547">Nucleotide-binding</keyword>
<keyword id="KW-1185">Reference proteome</keyword>
<keyword id="KW-0677">Repeat</keyword>
<keyword id="KW-1278">Translocase</keyword>
<keyword id="KW-0812">Transmembrane</keyword>
<keyword id="KW-1133">Transmembrane helix</keyword>
<keyword id="KW-0813">Transport</keyword>
<feature type="chain" id="PRO_0000093342" description="Multidrug resistance protein pgp-1">
    <location>
        <begin position="1"/>
        <end position="1321"/>
    </location>
</feature>
<feature type="topological domain" description="Cytoplasmic" evidence="1">
    <location>
        <begin position="1"/>
        <end position="77"/>
    </location>
</feature>
<feature type="transmembrane region" description="Helical" evidence="3">
    <location>
        <begin position="78"/>
        <end position="98"/>
    </location>
</feature>
<feature type="transmembrane region" description="Helical" evidence="3">
    <location>
        <begin position="144"/>
        <end position="164"/>
    </location>
</feature>
<feature type="transmembrane region" description="Helical" evidence="3">
    <location>
        <begin position="213"/>
        <end position="233"/>
    </location>
</feature>
<feature type="transmembrane region" description="Helical" evidence="3">
    <location>
        <begin position="240"/>
        <end position="260"/>
    </location>
</feature>
<feature type="transmembrane region" description="Helical" evidence="3">
    <location>
        <begin position="321"/>
        <end position="341"/>
    </location>
</feature>
<feature type="transmembrane region" description="Helical" evidence="3">
    <location>
        <begin position="350"/>
        <end position="370"/>
    </location>
</feature>
<feature type="topological domain" description="Cytoplasmic" evidence="1">
    <location>
        <begin position="371"/>
        <end position="753"/>
    </location>
</feature>
<feature type="transmembrane region" description="Helical" evidence="3">
    <location>
        <begin position="754"/>
        <end position="774"/>
    </location>
</feature>
<feature type="transmembrane region" description="Helical" evidence="3">
    <location>
        <begin position="798"/>
        <end position="818"/>
    </location>
</feature>
<feature type="transmembrane region" description="Helical" evidence="3">
    <location>
        <begin position="874"/>
        <end position="894"/>
    </location>
</feature>
<feature type="transmembrane region" description="Helical" evidence="3">
    <location>
        <begin position="895"/>
        <end position="915"/>
    </location>
</feature>
<feature type="transmembrane region" description="Helical" evidence="3">
    <location>
        <begin position="978"/>
        <end position="998"/>
    </location>
</feature>
<feature type="transmembrane region" description="Helical" evidence="3">
    <location>
        <begin position="1017"/>
        <end position="1037"/>
    </location>
</feature>
<feature type="topological domain" description="Cytoplasmic" evidence="1">
    <location>
        <begin position="1038"/>
        <end position="1321"/>
    </location>
</feature>
<feature type="domain" description="ABC transmembrane type-1 1" evidence="3">
    <location>
        <begin position="77"/>
        <end position="381"/>
    </location>
</feature>
<feature type="domain" description="ABC transporter 1" evidence="2">
    <location>
        <begin position="416"/>
        <end position="652"/>
    </location>
</feature>
<feature type="domain" description="ABC transmembrane type-1 2" evidence="3">
    <location>
        <begin position="754"/>
        <end position="1043"/>
    </location>
</feature>
<feature type="domain" description="ABC transporter 2" evidence="2">
    <location>
        <begin position="1077"/>
        <end position="1315"/>
    </location>
</feature>
<feature type="binding site" evidence="2">
    <location>
        <begin position="451"/>
        <end position="458"/>
    </location>
    <ligand>
        <name>ATP</name>
        <dbReference type="ChEBI" id="CHEBI:30616"/>
        <label>1</label>
    </ligand>
</feature>
<feature type="binding site" evidence="2">
    <location>
        <begin position="1112"/>
        <end position="1119"/>
    </location>
    <ligand>
        <name>ATP</name>
        <dbReference type="ChEBI" id="CHEBI:30616"/>
        <label>2</label>
    </ligand>
</feature>
<feature type="glycosylation site" description="N-linked (GlcNAc...) asparagine" evidence="1">
    <location>
        <position position="115"/>
    </location>
</feature>
<feature type="glycosylation site" description="N-linked (GlcNAc...) asparagine" evidence="1">
    <location>
        <position position="125"/>
    </location>
</feature>
<feature type="glycosylation site" description="N-linked (GlcNAc...) asparagine" evidence="1">
    <location>
        <position position="190"/>
    </location>
</feature>
<feature type="glycosylation site" description="N-linked (GlcNAc...) asparagine" evidence="1">
    <location>
        <position position="850"/>
    </location>
</feature>
<feature type="sequence conflict" description="In Ref. 1; CAA46190." evidence="5" ref="1">
    <original>T</original>
    <variation>I</variation>
    <location>
        <position position="156"/>
    </location>
</feature>
<feature type="helix" evidence="6">
    <location>
        <begin position="5"/>
        <end position="16"/>
    </location>
</feature>
<feature type="helix" evidence="6">
    <location>
        <begin position="21"/>
        <end position="33"/>
    </location>
</feature>
<feature type="turn" evidence="6">
    <location>
        <begin position="37"/>
        <end position="39"/>
    </location>
</feature>
<feature type="strand" evidence="6">
    <location>
        <begin position="42"/>
        <end position="44"/>
    </location>
</feature>
<feature type="helix" evidence="6">
    <location>
        <begin position="62"/>
        <end position="65"/>
    </location>
</feature>
<feature type="turn" evidence="6">
    <location>
        <begin position="66"/>
        <end position="68"/>
    </location>
</feature>
<feature type="helix" evidence="6">
    <location>
        <begin position="71"/>
        <end position="88"/>
    </location>
</feature>
<feature type="helix" evidence="6">
    <location>
        <begin position="90"/>
        <end position="113"/>
    </location>
</feature>
<feature type="helix" evidence="6">
    <location>
        <begin position="128"/>
        <end position="179"/>
    </location>
</feature>
<feature type="helix" evidence="6">
    <location>
        <begin position="184"/>
        <end position="189"/>
    </location>
</feature>
<feature type="helix" evidence="6">
    <location>
        <begin position="195"/>
        <end position="208"/>
    </location>
</feature>
<feature type="helix" evidence="6">
    <location>
        <begin position="212"/>
        <end position="234"/>
    </location>
</feature>
<feature type="helix" evidence="6">
    <location>
        <begin position="236"/>
        <end position="243"/>
    </location>
</feature>
<feature type="helix" evidence="6">
    <location>
        <begin position="246"/>
        <end position="283"/>
    </location>
</feature>
<feature type="helix" evidence="6">
    <location>
        <begin position="285"/>
        <end position="290"/>
    </location>
</feature>
<feature type="helix" evidence="6">
    <location>
        <begin position="294"/>
        <end position="345"/>
    </location>
</feature>
<feature type="turn" evidence="6">
    <location>
        <begin position="346"/>
        <end position="348"/>
    </location>
</feature>
<feature type="helix" evidence="6">
    <location>
        <begin position="352"/>
        <end position="392"/>
    </location>
</feature>
<feature type="turn" evidence="6">
    <location>
        <begin position="393"/>
        <end position="395"/>
    </location>
</feature>
<feature type="strand" evidence="6">
    <location>
        <begin position="402"/>
        <end position="404"/>
    </location>
</feature>
<feature type="strand" evidence="6">
    <location>
        <begin position="416"/>
        <end position="423"/>
    </location>
</feature>
<feature type="strand" evidence="6">
    <location>
        <begin position="426"/>
        <end position="428"/>
    </location>
</feature>
<feature type="strand" evidence="6">
    <location>
        <begin position="433"/>
        <end position="441"/>
    </location>
</feature>
<feature type="strand" evidence="6">
    <location>
        <begin position="446"/>
        <end position="451"/>
    </location>
</feature>
<feature type="strand" evidence="6">
    <location>
        <begin position="453"/>
        <end position="455"/>
    </location>
</feature>
<feature type="helix" evidence="6">
    <location>
        <begin position="457"/>
        <end position="464"/>
    </location>
</feature>
<feature type="strand" evidence="6">
    <location>
        <begin position="471"/>
        <end position="477"/>
    </location>
</feature>
<feature type="turn" evidence="6">
    <location>
        <begin position="482"/>
        <end position="484"/>
    </location>
</feature>
<feature type="helix" evidence="6">
    <location>
        <begin position="487"/>
        <end position="493"/>
    </location>
</feature>
<feature type="strand" evidence="6">
    <location>
        <begin position="494"/>
        <end position="497"/>
    </location>
</feature>
<feature type="strand" evidence="6">
    <location>
        <begin position="505"/>
        <end position="507"/>
    </location>
</feature>
<feature type="helix" evidence="6">
    <location>
        <begin position="508"/>
        <end position="513"/>
    </location>
</feature>
<feature type="helix" evidence="6">
    <location>
        <begin position="521"/>
        <end position="530"/>
    </location>
</feature>
<feature type="helix" evidence="6">
    <location>
        <begin position="534"/>
        <end position="539"/>
    </location>
</feature>
<feature type="turn" evidence="6">
    <location>
        <begin position="541"/>
        <end position="544"/>
    </location>
</feature>
<feature type="strand" evidence="6">
    <location>
        <begin position="545"/>
        <end position="552"/>
    </location>
</feature>
<feature type="helix" evidence="6">
    <location>
        <begin position="557"/>
        <end position="569"/>
    </location>
</feature>
<feature type="strand" evidence="6">
    <location>
        <begin position="574"/>
        <end position="580"/>
    </location>
</feature>
<feature type="turn" evidence="6">
    <location>
        <begin position="581"/>
        <end position="584"/>
    </location>
</feature>
<feature type="turn" evidence="6">
    <location>
        <begin position="587"/>
        <end position="589"/>
    </location>
</feature>
<feature type="helix" evidence="6">
    <location>
        <begin position="590"/>
        <end position="601"/>
    </location>
</feature>
<feature type="strand" evidence="6">
    <location>
        <begin position="604"/>
        <end position="609"/>
    </location>
</feature>
<feature type="turn" evidence="6">
    <location>
        <begin position="613"/>
        <end position="618"/>
    </location>
</feature>
<feature type="strand" evidence="6">
    <location>
        <begin position="620"/>
        <end position="626"/>
    </location>
</feature>
<feature type="strand" evidence="6">
    <location>
        <begin position="629"/>
        <end position="634"/>
    </location>
</feature>
<feature type="helix" evidence="6">
    <location>
        <begin position="636"/>
        <end position="640"/>
    </location>
</feature>
<feature type="turn" evidence="6">
    <location>
        <begin position="641"/>
        <end position="643"/>
    </location>
</feature>
<feature type="helix" evidence="6">
    <location>
        <begin position="645"/>
        <end position="663"/>
    </location>
</feature>
<feature type="helix" evidence="6">
    <location>
        <begin position="722"/>
        <end position="728"/>
    </location>
</feature>
<feature type="turn" evidence="6">
    <location>
        <begin position="729"/>
        <end position="732"/>
    </location>
</feature>
<feature type="helix" evidence="6">
    <location>
        <begin position="740"/>
        <end position="746"/>
    </location>
</feature>
<feature type="helix" evidence="6">
    <location>
        <begin position="747"/>
        <end position="750"/>
    </location>
</feature>
<feature type="helix" evidence="6">
    <location>
        <begin position="751"/>
        <end position="763"/>
    </location>
</feature>
<feature type="helix" evidence="6">
    <location>
        <begin position="764"/>
        <end position="766"/>
    </location>
</feature>
<feature type="helix" evidence="6">
    <location>
        <begin position="767"/>
        <end position="781"/>
    </location>
</feature>
<feature type="turn" evidence="6">
    <location>
        <begin position="788"/>
        <end position="792"/>
    </location>
</feature>
<feature type="helix" evidence="6">
    <location>
        <begin position="793"/>
        <end position="838"/>
    </location>
</feature>
<feature type="strand" evidence="6">
    <location>
        <begin position="842"/>
        <end position="844"/>
    </location>
</feature>
<feature type="helix" evidence="6">
    <location>
        <begin position="848"/>
        <end position="850"/>
    </location>
</feature>
<feature type="helix" evidence="6">
    <location>
        <begin position="852"/>
        <end position="860"/>
    </location>
</feature>
<feature type="helix" evidence="6">
    <location>
        <begin position="862"/>
        <end position="867"/>
    </location>
</feature>
<feature type="turn" evidence="6">
    <location>
        <begin position="868"/>
        <end position="870"/>
    </location>
</feature>
<feature type="helix" evidence="6">
    <location>
        <begin position="872"/>
        <end position="894"/>
    </location>
</feature>
<feature type="helix" evidence="6">
    <location>
        <begin position="896"/>
        <end position="916"/>
    </location>
</feature>
<feature type="turn" evidence="6">
    <location>
        <begin position="925"/>
        <end position="927"/>
    </location>
</feature>
<feature type="helix" evidence="6">
    <location>
        <begin position="930"/>
        <end position="943"/>
    </location>
</feature>
<feature type="helix" evidence="6">
    <location>
        <begin position="945"/>
        <end position="950"/>
    </location>
</feature>
<feature type="turn" evidence="6">
    <location>
        <begin position="951"/>
        <end position="953"/>
    </location>
</feature>
<feature type="helix" evidence="6">
    <location>
        <begin position="954"/>
        <end position="986"/>
    </location>
</feature>
<feature type="helix" evidence="6">
    <location>
        <begin position="989"/>
        <end position="1003"/>
    </location>
</feature>
<feature type="strand" evidence="6">
    <location>
        <begin position="1006"/>
        <end position="1009"/>
    </location>
</feature>
<feature type="helix" evidence="6">
    <location>
        <begin position="1014"/>
        <end position="1025"/>
    </location>
</feature>
<feature type="turn" evidence="6">
    <location>
        <begin position="1026"/>
        <end position="1028"/>
    </location>
</feature>
<feature type="helix" evidence="6">
    <location>
        <begin position="1033"/>
        <end position="1036"/>
    </location>
</feature>
<feature type="helix" evidence="6">
    <location>
        <begin position="1037"/>
        <end position="1056"/>
    </location>
</feature>
<feature type="strand" evidence="6">
    <location>
        <begin position="1077"/>
        <end position="1084"/>
    </location>
</feature>
<feature type="strand" evidence="6">
    <location>
        <begin position="1094"/>
        <end position="1102"/>
    </location>
</feature>
<feature type="strand" evidence="6">
    <location>
        <begin position="1107"/>
        <end position="1111"/>
    </location>
</feature>
<feature type="helix" evidence="6">
    <location>
        <begin position="1121"/>
        <end position="1125"/>
    </location>
</feature>
<feature type="strand" evidence="6">
    <location>
        <begin position="1132"/>
        <end position="1138"/>
    </location>
</feature>
<feature type="turn" evidence="6">
    <location>
        <begin position="1143"/>
        <end position="1145"/>
    </location>
</feature>
<feature type="helix" evidence="6">
    <location>
        <begin position="1148"/>
        <end position="1152"/>
    </location>
</feature>
<feature type="strand" evidence="6">
    <location>
        <begin position="1155"/>
        <end position="1158"/>
    </location>
</feature>
<feature type="strand" evidence="6">
    <location>
        <begin position="1166"/>
        <end position="1168"/>
    </location>
</feature>
<feature type="helix" evidence="6">
    <location>
        <begin position="1169"/>
        <end position="1173"/>
    </location>
</feature>
<feature type="strand" evidence="6">
    <location>
        <begin position="1174"/>
        <end position="1177"/>
    </location>
</feature>
<feature type="turn" evidence="6">
    <location>
        <begin position="1179"/>
        <end position="1181"/>
    </location>
</feature>
<feature type="helix" evidence="6">
    <location>
        <begin position="1184"/>
        <end position="1193"/>
    </location>
</feature>
<feature type="helix" evidence="6">
    <location>
        <begin position="1197"/>
        <end position="1201"/>
    </location>
</feature>
<feature type="turn" evidence="6">
    <location>
        <begin position="1204"/>
        <end position="1207"/>
    </location>
</feature>
<feature type="strand" evidence="6">
    <location>
        <begin position="1209"/>
        <end position="1211"/>
    </location>
</feature>
<feature type="turn" evidence="6">
    <location>
        <begin position="1212"/>
        <end position="1214"/>
    </location>
</feature>
<feature type="helix" evidence="6">
    <location>
        <begin position="1220"/>
        <end position="1233"/>
    </location>
</feature>
<feature type="strand" evidence="6">
    <location>
        <begin position="1237"/>
        <end position="1243"/>
    </location>
</feature>
<feature type="helix" evidence="6">
    <location>
        <begin position="1251"/>
        <end position="1260"/>
    </location>
</feature>
<feature type="turn" evidence="6">
    <location>
        <begin position="1261"/>
        <end position="1263"/>
    </location>
</feature>
<feature type="strand" evidence="6">
    <location>
        <begin position="1264"/>
        <end position="1272"/>
    </location>
</feature>
<feature type="strand" evidence="6">
    <location>
        <begin position="1274"/>
        <end position="1277"/>
    </location>
</feature>
<feature type="turn" evidence="6">
    <location>
        <begin position="1278"/>
        <end position="1281"/>
    </location>
</feature>
<feature type="strand" evidence="6">
    <location>
        <begin position="1283"/>
        <end position="1297"/>
    </location>
</feature>
<feature type="helix" evidence="6">
    <location>
        <begin position="1299"/>
        <end position="1304"/>
    </location>
</feature>
<protein>
    <recommendedName>
        <fullName>Multidrug resistance protein pgp-1</fullName>
        <ecNumber>7.6.2.2</ecNumber>
    </recommendedName>
    <alternativeName>
        <fullName>P-glycoprotein A</fullName>
    </alternativeName>
    <alternativeName>
        <fullName>P-glycoprotein-related protein 1</fullName>
    </alternativeName>
</protein>
<organism>
    <name type="scientific">Caenorhabditis elegans</name>
    <dbReference type="NCBI Taxonomy" id="6239"/>
    <lineage>
        <taxon>Eukaryota</taxon>
        <taxon>Metazoa</taxon>
        <taxon>Ecdysozoa</taxon>
        <taxon>Nematoda</taxon>
        <taxon>Chromadorea</taxon>
        <taxon>Rhabditida</taxon>
        <taxon>Rhabditina</taxon>
        <taxon>Rhabditomorpha</taxon>
        <taxon>Rhabditoidea</taxon>
        <taxon>Rhabditidae</taxon>
        <taxon>Peloderinae</taxon>
        <taxon>Caenorhabditis</taxon>
    </lineage>
</organism>
<gene>
    <name type="primary">pgp-1</name>
    <name type="ORF">K08E7.9</name>
</gene>
<name>PGP1_CAEEL</name>
<accession>P34712</accession>
<accession>Q21349</accession>
<comment type="function">
    <text>Energy-dependent efflux pump responsible for decreased drug accumulation in multidrug-resistant cells.</text>
</comment>
<comment type="catalytic activity">
    <reaction>
        <text>ATP + H2O + xenobioticSide 1 = ADP + phosphate + xenobioticSide 2.</text>
        <dbReference type="EC" id="7.6.2.2"/>
    </reaction>
</comment>
<comment type="subcellular location">
    <subcellularLocation>
        <location>Membrane</location>
        <topology>Multi-pass membrane protein</topology>
    </subcellularLocation>
</comment>
<comment type="tissue specificity">
    <text evidence="4">Intestinal cells.</text>
</comment>
<comment type="similarity">
    <text evidence="5">Belongs to the ABC transporter superfamily. ABCB family. Multidrug resistance exporter (TC 3.A.1.201) subfamily.</text>
</comment>
<proteinExistence type="evidence at protein level"/>
<reference key="1">
    <citation type="journal article" date="1992" name="J. Mol. Biol.">
        <title>The P-glycoprotein gene family of Caenorhabditis elegans. Cloning and characterization of genomic and complementary DNA sequences.</title>
        <authorList>
            <person name="Lincke C.R."/>
            <person name="The I."/>
            <person name="van Groenigen M."/>
            <person name="Borst P."/>
        </authorList>
    </citation>
    <scope>NUCLEOTIDE SEQUENCE [GENOMIC DNA]</scope>
    <source>
        <strain>Bristol N2</strain>
    </source>
</reference>
<reference key="2">
    <citation type="journal article" date="1998" name="Science">
        <title>Genome sequence of the nematode C. elegans: a platform for investigating biology.</title>
        <authorList>
            <consortium name="The C. elegans sequencing consortium"/>
        </authorList>
    </citation>
    <scope>NUCLEOTIDE SEQUENCE [LARGE SCALE GENOMIC DNA]</scope>
    <source>
        <strain>Bristol N2</strain>
    </source>
</reference>
<reference key="3">
    <citation type="journal article" date="1993" name="EMBO J.">
        <title>The expression of two P-glycoprotein (pgp) genes in transgenic Caenorhabditis elegans is confined to intestinal cells.</title>
        <authorList>
            <person name="Lincke C.R."/>
            <person name="Broeks A."/>
            <person name="The I."/>
            <person name="Plasterk H.A."/>
            <person name="Borst P."/>
        </authorList>
    </citation>
    <scope>TISSUE SPECIFICITY</scope>
    <source>
        <strain>Bristol N2</strain>
    </source>
</reference>
<evidence type="ECO:0000255" key="1"/>
<evidence type="ECO:0000255" key="2">
    <source>
        <dbReference type="PROSITE-ProRule" id="PRU00434"/>
    </source>
</evidence>
<evidence type="ECO:0000255" key="3">
    <source>
        <dbReference type="PROSITE-ProRule" id="PRU00441"/>
    </source>
</evidence>
<evidence type="ECO:0000269" key="4">
    <source>
    </source>
</evidence>
<evidence type="ECO:0000305" key="5"/>
<evidence type="ECO:0007829" key="6">
    <source>
        <dbReference type="PDB" id="4F4C"/>
    </source>
</evidence>
<dbReference type="EC" id="7.6.2.2"/>
<dbReference type="EMBL" id="X65054">
    <property type="protein sequence ID" value="CAA46190.1"/>
    <property type="molecule type" value="Genomic_DNA"/>
</dbReference>
<dbReference type="EMBL" id="Z77666">
    <property type="protein sequence ID" value="CAB01232.1"/>
    <property type="molecule type" value="Genomic_DNA"/>
</dbReference>
<dbReference type="PIR" id="S27337">
    <property type="entry name" value="S27337"/>
</dbReference>
<dbReference type="PIR" id="T23476">
    <property type="entry name" value="T23476"/>
</dbReference>
<dbReference type="RefSeq" id="NP_502413.1">
    <property type="nucleotide sequence ID" value="NM_070012.6"/>
</dbReference>
<dbReference type="PDB" id="4F4C">
    <property type="method" value="X-ray"/>
    <property type="resolution" value="3.40 A"/>
    <property type="chains" value="A=1-1321"/>
</dbReference>
<dbReference type="PDBsum" id="4F4C"/>
<dbReference type="SMR" id="P34712"/>
<dbReference type="FunCoup" id="P34712">
    <property type="interactions" value="239"/>
</dbReference>
<dbReference type="STRING" id="6239.K08E7.9.1"/>
<dbReference type="TCDB" id="3.A.1.201.14">
    <property type="family name" value="the atp-binding cassette (abc) superfamily"/>
</dbReference>
<dbReference type="GlyCosmos" id="P34712">
    <property type="glycosylation" value="4 sites, No reported glycans"/>
</dbReference>
<dbReference type="iPTMnet" id="P34712"/>
<dbReference type="PaxDb" id="6239-K08E7.9"/>
<dbReference type="PeptideAtlas" id="P34712"/>
<dbReference type="EnsemblMetazoa" id="K08E7.9.1">
    <property type="protein sequence ID" value="K08E7.9.1"/>
    <property type="gene ID" value="WBGene00003995"/>
</dbReference>
<dbReference type="GeneID" id="178215"/>
<dbReference type="KEGG" id="cel:CELE_K08E7.9"/>
<dbReference type="UCSC" id="K08E7.9">
    <property type="organism name" value="c. elegans"/>
</dbReference>
<dbReference type="AGR" id="WB:WBGene00003995"/>
<dbReference type="CTD" id="178215"/>
<dbReference type="WormBase" id="K08E7.9">
    <property type="protein sequence ID" value="CE11932"/>
    <property type="gene ID" value="WBGene00003995"/>
    <property type="gene designation" value="pgp-1"/>
</dbReference>
<dbReference type="eggNOG" id="KOG0055">
    <property type="taxonomic scope" value="Eukaryota"/>
</dbReference>
<dbReference type="GeneTree" id="ENSGT00970000195996"/>
<dbReference type="HOGENOM" id="CLU_000604_17_2_1"/>
<dbReference type="InParanoid" id="P34712"/>
<dbReference type="OMA" id="VNGWIQM"/>
<dbReference type="OrthoDB" id="6500128at2759"/>
<dbReference type="PhylomeDB" id="P34712"/>
<dbReference type="BRENDA" id="7.6.2.2">
    <property type="organism ID" value="1045"/>
</dbReference>
<dbReference type="EvolutionaryTrace" id="P34712"/>
<dbReference type="PRO" id="PR:P34712"/>
<dbReference type="Proteomes" id="UP000001940">
    <property type="component" value="Chromosome IV"/>
</dbReference>
<dbReference type="Bgee" id="WBGene00003995">
    <property type="expression patterns" value="Expressed in adult organism and 3 other cell types or tissues"/>
</dbReference>
<dbReference type="GO" id="GO:0016324">
    <property type="term" value="C:apical plasma membrane"/>
    <property type="evidence" value="ECO:0000314"/>
    <property type="project" value="WormBase"/>
</dbReference>
<dbReference type="GO" id="GO:0016020">
    <property type="term" value="C:membrane"/>
    <property type="evidence" value="ECO:0000318"/>
    <property type="project" value="GO_Central"/>
</dbReference>
<dbReference type="GO" id="GO:0008559">
    <property type="term" value="F:ABC-type xenobiotic transporter activity"/>
    <property type="evidence" value="ECO:0007669"/>
    <property type="project" value="UniProtKB-EC"/>
</dbReference>
<dbReference type="GO" id="GO:0005524">
    <property type="term" value="F:ATP binding"/>
    <property type="evidence" value="ECO:0007669"/>
    <property type="project" value="UniProtKB-KW"/>
</dbReference>
<dbReference type="GO" id="GO:0016887">
    <property type="term" value="F:ATP hydrolysis activity"/>
    <property type="evidence" value="ECO:0007669"/>
    <property type="project" value="InterPro"/>
</dbReference>
<dbReference type="GO" id="GO:0042626">
    <property type="term" value="F:ATPase-coupled transmembrane transporter activity"/>
    <property type="evidence" value="ECO:0000318"/>
    <property type="project" value="GO_Central"/>
</dbReference>
<dbReference type="GO" id="GO:0015562">
    <property type="term" value="F:efflux transmembrane transporter activity"/>
    <property type="evidence" value="ECO:0000250"/>
    <property type="project" value="WormBase"/>
</dbReference>
<dbReference type="GO" id="GO:0050829">
    <property type="term" value="P:defense response to Gram-negative bacterium"/>
    <property type="evidence" value="ECO:0000316"/>
    <property type="project" value="WormBase"/>
</dbReference>
<dbReference type="GO" id="GO:0045087">
    <property type="term" value="P:innate immune response"/>
    <property type="evidence" value="ECO:0000316"/>
    <property type="project" value="WormBase"/>
</dbReference>
<dbReference type="GO" id="GO:0010038">
    <property type="term" value="P:response to metal ion"/>
    <property type="evidence" value="ECO:0000316"/>
    <property type="project" value="WormBase"/>
</dbReference>
<dbReference type="GO" id="GO:0093002">
    <property type="term" value="P:response to nematicide"/>
    <property type="evidence" value="ECO:0000270"/>
    <property type="project" value="WormBase"/>
</dbReference>
<dbReference type="GO" id="GO:0055085">
    <property type="term" value="P:transmembrane transport"/>
    <property type="evidence" value="ECO:0000318"/>
    <property type="project" value="GO_Central"/>
</dbReference>
<dbReference type="CDD" id="cd18577">
    <property type="entry name" value="ABC_6TM_Pgp_ABCB1_D1_like"/>
    <property type="match status" value="1"/>
</dbReference>
<dbReference type="CDD" id="cd18578">
    <property type="entry name" value="ABC_6TM_Pgp_ABCB1_D2_like"/>
    <property type="match status" value="1"/>
</dbReference>
<dbReference type="CDD" id="cd03249">
    <property type="entry name" value="ABC_MTABC3_MDL1_MDL2"/>
    <property type="match status" value="2"/>
</dbReference>
<dbReference type="FunFam" id="3.40.50.300:FF:000916">
    <property type="entry name" value="ABC transporter B family member 9"/>
    <property type="match status" value="2"/>
</dbReference>
<dbReference type="FunFam" id="1.20.1560.10:FF:000018">
    <property type="entry name" value="ATP-binding cassette subfamily B member 11"/>
    <property type="match status" value="1"/>
</dbReference>
<dbReference type="Gene3D" id="1.20.1560.10">
    <property type="entry name" value="ABC transporter type 1, transmembrane domain"/>
    <property type="match status" value="2"/>
</dbReference>
<dbReference type="Gene3D" id="3.40.50.300">
    <property type="entry name" value="P-loop containing nucleotide triphosphate hydrolases"/>
    <property type="match status" value="2"/>
</dbReference>
<dbReference type="InterPro" id="IPR003593">
    <property type="entry name" value="AAA+_ATPase"/>
</dbReference>
<dbReference type="InterPro" id="IPR011527">
    <property type="entry name" value="ABC1_TM_dom"/>
</dbReference>
<dbReference type="InterPro" id="IPR036640">
    <property type="entry name" value="ABC1_TM_sf"/>
</dbReference>
<dbReference type="InterPro" id="IPR003439">
    <property type="entry name" value="ABC_transporter-like_ATP-bd"/>
</dbReference>
<dbReference type="InterPro" id="IPR017871">
    <property type="entry name" value="ABC_transporter-like_CS"/>
</dbReference>
<dbReference type="InterPro" id="IPR027417">
    <property type="entry name" value="P-loop_NTPase"/>
</dbReference>
<dbReference type="InterPro" id="IPR039421">
    <property type="entry name" value="Type_1_exporter"/>
</dbReference>
<dbReference type="PANTHER" id="PTHR43394">
    <property type="entry name" value="ATP-DEPENDENT PERMEASE MDL1, MITOCHONDRIAL"/>
    <property type="match status" value="1"/>
</dbReference>
<dbReference type="PANTHER" id="PTHR43394:SF27">
    <property type="entry name" value="ATP-DEPENDENT TRANSLOCASE ABCB1-LIKE"/>
    <property type="match status" value="1"/>
</dbReference>
<dbReference type="Pfam" id="PF00664">
    <property type="entry name" value="ABC_membrane"/>
    <property type="match status" value="2"/>
</dbReference>
<dbReference type="Pfam" id="PF00005">
    <property type="entry name" value="ABC_tran"/>
    <property type="match status" value="2"/>
</dbReference>
<dbReference type="SMART" id="SM00382">
    <property type="entry name" value="AAA"/>
    <property type="match status" value="2"/>
</dbReference>
<dbReference type="SUPFAM" id="SSF90123">
    <property type="entry name" value="ABC transporter transmembrane region"/>
    <property type="match status" value="2"/>
</dbReference>
<dbReference type="SUPFAM" id="SSF52540">
    <property type="entry name" value="P-loop containing nucleoside triphosphate hydrolases"/>
    <property type="match status" value="2"/>
</dbReference>
<dbReference type="PROSITE" id="PS50929">
    <property type="entry name" value="ABC_TM1F"/>
    <property type="match status" value="2"/>
</dbReference>
<dbReference type="PROSITE" id="PS00211">
    <property type="entry name" value="ABC_TRANSPORTER_1"/>
    <property type="match status" value="2"/>
</dbReference>
<dbReference type="PROSITE" id="PS50893">
    <property type="entry name" value="ABC_TRANSPORTER_2"/>
    <property type="match status" value="2"/>
</dbReference>